<evidence type="ECO:0000256" key="1">
    <source>
        <dbReference type="SAM" id="MobiDB-lite"/>
    </source>
</evidence>
<dbReference type="EMBL" id="BC078911">
    <property type="protein sequence ID" value="AAH78911.1"/>
    <property type="molecule type" value="mRNA"/>
</dbReference>
<dbReference type="RefSeq" id="NP_001019523.2">
    <property type="nucleotide sequence ID" value="NM_001024352.1"/>
</dbReference>
<dbReference type="RefSeq" id="XP_006241352.1">
    <property type="nucleotide sequence ID" value="XM_006241290.5"/>
</dbReference>
<dbReference type="RefSeq" id="XP_006241353.1">
    <property type="nucleotide sequence ID" value="XM_006241291.5"/>
</dbReference>
<dbReference type="RefSeq" id="XP_008763541.1">
    <property type="nucleotide sequence ID" value="XM_008765319.2"/>
</dbReference>
<dbReference type="FunCoup" id="Q6AYU0">
    <property type="interactions" value="3"/>
</dbReference>
<dbReference type="STRING" id="10116.ENSRNOP00000069887"/>
<dbReference type="GlyGen" id="Q6AYU0">
    <property type="glycosylation" value="1 site"/>
</dbReference>
<dbReference type="PhosphoSitePlus" id="Q6AYU0"/>
<dbReference type="PaxDb" id="10116-ENSRNOP00000009695"/>
<dbReference type="GeneID" id="500827"/>
<dbReference type="KEGG" id="rno:500827"/>
<dbReference type="UCSC" id="RGD:1563125">
    <property type="organism name" value="rat"/>
</dbReference>
<dbReference type="AGR" id="RGD:1563125"/>
<dbReference type="CTD" id="500827"/>
<dbReference type="RGD" id="1563125">
    <property type="gene designation" value="C7h12orf50"/>
</dbReference>
<dbReference type="VEuPathDB" id="HostDB:ENSRNOG00000051928"/>
<dbReference type="eggNOG" id="KOG4791">
    <property type="taxonomic scope" value="Eukaryota"/>
</dbReference>
<dbReference type="InParanoid" id="Q6AYU0"/>
<dbReference type="OrthoDB" id="66759at9989"/>
<dbReference type="PhylomeDB" id="Q6AYU0"/>
<dbReference type="TreeFam" id="TF335608"/>
<dbReference type="PRO" id="PR:Q6AYU0"/>
<dbReference type="Proteomes" id="UP000002494">
    <property type="component" value="Chromosome 7"/>
</dbReference>
<dbReference type="Bgee" id="ENSRNOG00000051928">
    <property type="expression patterns" value="Expressed in testis"/>
</dbReference>
<dbReference type="ExpressionAtlas" id="Q6AYU0">
    <property type="expression patterns" value="baseline"/>
</dbReference>
<dbReference type="GO" id="GO:0016973">
    <property type="term" value="P:poly(A)+ mRNA export from nucleus"/>
    <property type="evidence" value="ECO:0000318"/>
    <property type="project" value="GO_Central"/>
</dbReference>
<dbReference type="InterPro" id="IPR040943">
    <property type="entry name" value="DUF5571"/>
</dbReference>
<dbReference type="InterPro" id="IPR041686">
    <property type="entry name" value="Znf-CCCH_3"/>
</dbReference>
<dbReference type="PANTHER" id="PTHR15725:SF1">
    <property type="entry name" value="RIKEN CDNA 1700017N19 GENE"/>
    <property type="match status" value="1"/>
</dbReference>
<dbReference type="PANTHER" id="PTHR15725">
    <property type="entry name" value="ZN-FINGER, C-X8-C-X5-C-X3-H TYPE-CONTAINING"/>
    <property type="match status" value="1"/>
</dbReference>
<dbReference type="Pfam" id="PF17732">
    <property type="entry name" value="DUF5571"/>
    <property type="match status" value="1"/>
</dbReference>
<dbReference type="Pfam" id="PF15663">
    <property type="entry name" value="zf-CCCH_3"/>
    <property type="match status" value="1"/>
</dbReference>
<name>CL050_RAT</name>
<organism>
    <name type="scientific">Rattus norvegicus</name>
    <name type="common">Rat</name>
    <dbReference type="NCBI Taxonomy" id="10116"/>
    <lineage>
        <taxon>Eukaryota</taxon>
        <taxon>Metazoa</taxon>
        <taxon>Chordata</taxon>
        <taxon>Craniata</taxon>
        <taxon>Vertebrata</taxon>
        <taxon>Euteleostomi</taxon>
        <taxon>Mammalia</taxon>
        <taxon>Eutheria</taxon>
        <taxon>Euarchontoglires</taxon>
        <taxon>Glires</taxon>
        <taxon>Rodentia</taxon>
        <taxon>Myomorpha</taxon>
        <taxon>Muroidea</taxon>
        <taxon>Muridae</taxon>
        <taxon>Murinae</taxon>
        <taxon>Rattus</taxon>
    </lineage>
</organism>
<accession>Q6AYU0</accession>
<reference key="1">
    <citation type="journal article" date="2004" name="Genome Res.">
        <title>The status, quality, and expansion of the NIH full-length cDNA project: the Mammalian Gene Collection (MGC).</title>
        <authorList>
            <consortium name="The MGC Project Team"/>
        </authorList>
    </citation>
    <scope>NUCLEOTIDE SEQUENCE [LARGE SCALE MRNA]</scope>
    <source>
        <tissue>Testis</tissue>
    </source>
</reference>
<proteinExistence type="evidence at transcript level"/>
<keyword id="KW-1185">Reference proteome</keyword>
<protein>
    <recommendedName>
        <fullName>Uncharacterized protein C12orf50 homolog</fullName>
    </recommendedName>
</protein>
<sequence>MEMQQNCSISCFWETQPLGCVKISCIFYHSKPRNINGLFLPPSSNTTLQKESQEGSPPPTQSQEPLKPMENVSRPIHHPLVLKTNFEEEEEEEEKPNDASSLWTKTPEEIEEKRAIKEMCYKSGEYYRFHAPPDIPSSKSIAPTVEKELEKPLENGSELQEGDGLTVPTKFSLFERAGEAKTSLDRKPRTDIAAFENGGGDCYAPQRIIFLGVDESEALAEDKETTSKGSNAKEESKNGLHPKHPLTARLVPTTHVLNATENISMKCRENPSSMNDVQPVRKPHFKGVKKRKWIYDEPKNFPGSGMRRAVHIPNPKHKMSYHHHNKNRNAENASYTHAQRDAVRTVTLNAPPRSRPTSGSYNKADVNKDPKLNLCPDKHMSTSYNGSAWRRRIPFSKTYSKTEKIYPEPRRNGSK</sequence>
<feature type="chain" id="PRO_0000295236" description="Uncharacterized protein C12orf50 homolog">
    <location>
        <begin position="1"/>
        <end position="415"/>
    </location>
</feature>
<feature type="region of interest" description="Disordered" evidence="1">
    <location>
        <begin position="39"/>
        <end position="77"/>
    </location>
</feature>
<feature type="region of interest" description="Disordered" evidence="1">
    <location>
        <begin position="220"/>
        <end position="247"/>
    </location>
</feature>
<feature type="region of interest" description="Disordered" evidence="1">
    <location>
        <begin position="346"/>
        <end position="415"/>
    </location>
</feature>
<feature type="compositionally biased region" description="Basic and acidic residues" evidence="1">
    <location>
        <begin position="220"/>
        <end position="238"/>
    </location>
</feature>
<feature type="compositionally biased region" description="Basic and acidic residues" evidence="1">
    <location>
        <begin position="365"/>
        <end position="380"/>
    </location>
</feature>
<feature type="compositionally biased region" description="Basic and acidic residues" evidence="1">
    <location>
        <begin position="400"/>
        <end position="415"/>
    </location>
</feature>